<organism>
    <name type="scientific">Fusarium mangiferae</name>
    <name type="common">Mango malformation disease fungus</name>
    <dbReference type="NCBI Taxonomy" id="192010"/>
    <lineage>
        <taxon>Eukaryota</taxon>
        <taxon>Fungi</taxon>
        <taxon>Dikarya</taxon>
        <taxon>Ascomycota</taxon>
        <taxon>Pezizomycotina</taxon>
        <taxon>Sordariomycetes</taxon>
        <taxon>Hypocreomycetidae</taxon>
        <taxon>Hypocreales</taxon>
        <taxon>Nectriaceae</taxon>
        <taxon>Fusarium</taxon>
        <taxon>Fusarium fujikuroi species complex</taxon>
    </lineage>
</organism>
<evidence type="ECO:0000269" key="1">
    <source ref="2"/>
</evidence>
<evidence type="ECO:0000303" key="2">
    <source ref="2"/>
</evidence>
<evidence type="ECO:0000305" key="3"/>
<evidence type="ECO:0000305" key="4">
    <source ref="2"/>
</evidence>
<reference key="1">
    <citation type="journal article" date="2016" name="Genome Biol. Evol.">
        <title>Comparative 'omics' of the Fusarium fujikuroi species complex highlights differences in genetic potential and metabolite synthesis.</title>
        <authorList>
            <person name="Niehaus E.-M."/>
            <person name="Muensterkoetter M."/>
            <person name="Proctor R.H."/>
            <person name="Brown D.W."/>
            <person name="Sharon A."/>
            <person name="Idan Y."/>
            <person name="Oren-Young L."/>
            <person name="Sieber C.M."/>
            <person name="Novak O."/>
            <person name="Pencik A."/>
            <person name="Tarkowska D."/>
            <person name="Hromadova K."/>
            <person name="Freeman S."/>
            <person name="Maymon M."/>
            <person name="Elazar M."/>
            <person name="Youssef S.A."/>
            <person name="El-Shabrawy E.S.M."/>
            <person name="Shalaby A.B.A."/>
            <person name="Houterman P."/>
            <person name="Brock N.L."/>
            <person name="Burkhardt I."/>
            <person name="Tsavkelova E.A."/>
            <person name="Dickschat J.S."/>
            <person name="Galuszka P."/>
            <person name="Gueldener U."/>
            <person name="Tudzynski B."/>
        </authorList>
    </citation>
    <scope>NUCLEOTIDE SEQUENCE [LARGE SCALE GENOMIC DNA]</scope>
    <source>
        <strain>MRC7560</strain>
    </source>
</reference>
<reference key="2">
    <citation type="journal article" date="2021" name="Front. Fungal Biol.">
        <title>Biosynthesis of fusapyrone depends on the H3K9 methyltransferase, FmKmt1, in Fusarium mangiferae.</title>
        <authorList>
            <person name="Atanasoff-Kardjalieff A.K."/>
            <person name="Luenne F."/>
            <person name="Kalinina S."/>
            <person name="Strauss J."/>
            <person name="Humpf H.U."/>
            <person name="Studt-Reinhold L."/>
        </authorList>
    </citation>
    <scope>FUNCTION</scope>
    <scope>DISRUPTION PHENOTYPE</scope>
</reference>
<keyword id="KW-0808">Transferase</keyword>
<sequence length="292" mass="32694">MSRAQSSPTVIQWVIDTHPLWPSALKTKDLTSAASRALSLLTEEEQSSVLRYYHVRDAKLALASALLKRYAISRFCHVPWFQAKTTRDSRTKPVFVLPSGDEPLIFNVSHQAGLAVFLAVRDPPKGLAVGVDVVCPSERRDRDLSSLEEDGWASFVDIHADVFGAGEVSALKSMNPVPTVQGRDRALRYFYALWCLREAYVKMTGDALLASWLKDLEMHKFAPPEDMKEAQEVRLRGKKVEGVDVRLMPLLEEYMVSTAIRNGDNGERVELGEFQSLDMEEILAFGEKASKP</sequence>
<comment type="function">
    <text evidence="1 4">Transfers the 4'-phosphopantetheine moiety from coenzyme A to a Ser of an acyl-carrier-protein (Ref.2). The enzyme is able to transfer the cofactor to a broad range of enzymes with acyl- or peptidyl-carrier protein domains (Probable). Required for primary biological processes such as growth and asexual/sexual development, and activates target enzymes involved in the synthesis of metabolites such as fatty acids, nonribosomal peptides and polyketides such as the gamma-pyrones fusapyrone (FPY) and deoxyfusapyrone (dFPY) (Ref.2).</text>
</comment>
<comment type="catalytic activity">
    <reaction evidence="4">
        <text>apo-[ACP] + CoA = holo-[ACP] + adenosine 3',5'-bisphosphate + H(+)</text>
        <dbReference type="Rhea" id="RHEA:12068"/>
        <dbReference type="Rhea" id="RHEA-COMP:9685"/>
        <dbReference type="Rhea" id="RHEA-COMP:9690"/>
        <dbReference type="ChEBI" id="CHEBI:15378"/>
        <dbReference type="ChEBI" id="CHEBI:29999"/>
        <dbReference type="ChEBI" id="CHEBI:57287"/>
        <dbReference type="ChEBI" id="CHEBI:58343"/>
        <dbReference type="ChEBI" id="CHEBI:64479"/>
        <dbReference type="EC" id="2.7.8.7"/>
    </reaction>
    <physiologicalReaction direction="left-to-right" evidence="4">
        <dbReference type="Rhea" id="RHEA:12069"/>
    </physiologicalReaction>
</comment>
<comment type="disruption phenotype">
    <text evidence="1">Leads to lysine auxotrophy (Ref.2). Impairs the production of the gamma-pyrones fusapyrone (FPY) and deoxyfusapyrone (dFPY) (Ref.2).</text>
</comment>
<comment type="similarity">
    <text evidence="3">Belongs to the P-Pant transferase superfamily.</text>
</comment>
<accession>A0A1L7T8M0</accession>
<proteinExistence type="inferred from homology"/>
<protein>
    <recommendedName>
        <fullName evidence="2">4'-phosphopantetheinyl transferase 1</fullName>
        <shortName evidence="2">PPT1</shortName>
        <shortName>PPTase 1</shortName>
        <ecNumber evidence="4">2.7.8.7</ecNumber>
    </recommendedName>
</protein>
<name>PPTA_FUSMA</name>
<feature type="chain" id="PRO_0000458169" description="4'-phosphopantetheinyl transferase 1">
    <location>
        <begin position="1"/>
        <end position="292"/>
    </location>
</feature>
<dbReference type="EC" id="2.7.8.7" evidence="4"/>
<dbReference type="EMBL" id="FCQH01000004">
    <property type="protein sequence ID" value="CVK91136.1"/>
    <property type="molecule type" value="Genomic_DNA"/>
</dbReference>
<dbReference type="SMR" id="A0A1L7T8M0"/>
<dbReference type="VEuPathDB" id="FungiDB:FMAN_09282"/>
<dbReference type="Proteomes" id="UP000184255">
    <property type="component" value="Unassembled WGS sequence"/>
</dbReference>
<dbReference type="GO" id="GO:0005829">
    <property type="term" value="C:cytosol"/>
    <property type="evidence" value="ECO:0007669"/>
    <property type="project" value="TreeGrafter"/>
</dbReference>
<dbReference type="GO" id="GO:0008897">
    <property type="term" value="F:holo-[acyl-carrier-protein] synthase activity"/>
    <property type="evidence" value="ECO:0007669"/>
    <property type="project" value="InterPro"/>
</dbReference>
<dbReference type="GO" id="GO:0000287">
    <property type="term" value="F:magnesium ion binding"/>
    <property type="evidence" value="ECO:0007669"/>
    <property type="project" value="InterPro"/>
</dbReference>
<dbReference type="GO" id="GO:0019878">
    <property type="term" value="P:lysine biosynthetic process via aminoadipic acid"/>
    <property type="evidence" value="ECO:0007669"/>
    <property type="project" value="TreeGrafter"/>
</dbReference>
<dbReference type="Gene3D" id="3.90.470.20">
    <property type="entry name" value="4'-phosphopantetheinyl transferase domain"/>
    <property type="match status" value="2"/>
</dbReference>
<dbReference type="InterPro" id="IPR008278">
    <property type="entry name" value="4-PPantetheinyl_Trfase_dom"/>
</dbReference>
<dbReference type="InterPro" id="IPR037143">
    <property type="entry name" value="4-PPantetheinyl_Trfase_dom_sf"/>
</dbReference>
<dbReference type="InterPro" id="IPR055066">
    <property type="entry name" value="AASDHPPT_N"/>
</dbReference>
<dbReference type="InterPro" id="IPR050559">
    <property type="entry name" value="P-Pant_transferase_sf"/>
</dbReference>
<dbReference type="PANTHER" id="PTHR12215:SF10">
    <property type="entry name" value="L-AMINOADIPATE-SEMIALDEHYDE DEHYDROGENASE-PHOSPHOPANTETHEINYL TRANSFERASE"/>
    <property type="match status" value="1"/>
</dbReference>
<dbReference type="PANTHER" id="PTHR12215">
    <property type="entry name" value="PHOSPHOPANTETHEINE TRANSFERASE"/>
    <property type="match status" value="1"/>
</dbReference>
<dbReference type="Pfam" id="PF22624">
    <property type="entry name" value="AASDHPPT_N"/>
    <property type="match status" value="1"/>
</dbReference>
<dbReference type="Pfam" id="PF01648">
    <property type="entry name" value="ACPS"/>
    <property type="match status" value="1"/>
</dbReference>
<dbReference type="SUPFAM" id="SSF56214">
    <property type="entry name" value="4'-phosphopantetheinyl transferase"/>
    <property type="match status" value="2"/>
</dbReference>
<gene>
    <name evidence="2" type="primary">PPT1</name>
    <name type="ORF">FMAN_09282</name>
</gene>